<organism>
    <name type="scientific">Chlorobium phaeobacteroides (strain BS1)</name>
    <dbReference type="NCBI Taxonomy" id="331678"/>
    <lineage>
        <taxon>Bacteria</taxon>
        <taxon>Pseudomonadati</taxon>
        <taxon>Chlorobiota</taxon>
        <taxon>Chlorobiia</taxon>
        <taxon>Chlorobiales</taxon>
        <taxon>Chlorobiaceae</taxon>
        <taxon>Chlorobium/Pelodictyon group</taxon>
        <taxon>Chlorobium</taxon>
    </lineage>
</organism>
<dbReference type="EMBL" id="CP001101">
    <property type="protein sequence ID" value="ACE05190.1"/>
    <property type="molecule type" value="Genomic_DNA"/>
</dbReference>
<dbReference type="SMR" id="B3EP51"/>
<dbReference type="STRING" id="331678.Cphamn1_2286"/>
<dbReference type="KEGG" id="cpb:Cphamn1_2286"/>
<dbReference type="eggNOG" id="COG0093">
    <property type="taxonomic scope" value="Bacteria"/>
</dbReference>
<dbReference type="HOGENOM" id="CLU_095071_2_1_10"/>
<dbReference type="OrthoDB" id="9806379at2"/>
<dbReference type="GO" id="GO:0022625">
    <property type="term" value="C:cytosolic large ribosomal subunit"/>
    <property type="evidence" value="ECO:0007669"/>
    <property type="project" value="TreeGrafter"/>
</dbReference>
<dbReference type="GO" id="GO:0070180">
    <property type="term" value="F:large ribosomal subunit rRNA binding"/>
    <property type="evidence" value="ECO:0007669"/>
    <property type="project" value="TreeGrafter"/>
</dbReference>
<dbReference type="GO" id="GO:0003735">
    <property type="term" value="F:structural constituent of ribosome"/>
    <property type="evidence" value="ECO:0007669"/>
    <property type="project" value="InterPro"/>
</dbReference>
<dbReference type="GO" id="GO:0006412">
    <property type="term" value="P:translation"/>
    <property type="evidence" value="ECO:0007669"/>
    <property type="project" value="UniProtKB-UniRule"/>
</dbReference>
<dbReference type="CDD" id="cd00337">
    <property type="entry name" value="Ribosomal_uL14"/>
    <property type="match status" value="1"/>
</dbReference>
<dbReference type="FunFam" id="2.40.150.20:FF:000001">
    <property type="entry name" value="50S ribosomal protein L14"/>
    <property type="match status" value="1"/>
</dbReference>
<dbReference type="Gene3D" id="2.40.150.20">
    <property type="entry name" value="Ribosomal protein L14"/>
    <property type="match status" value="1"/>
</dbReference>
<dbReference type="HAMAP" id="MF_01367">
    <property type="entry name" value="Ribosomal_uL14"/>
    <property type="match status" value="1"/>
</dbReference>
<dbReference type="InterPro" id="IPR000218">
    <property type="entry name" value="Ribosomal_uL14"/>
</dbReference>
<dbReference type="InterPro" id="IPR005745">
    <property type="entry name" value="Ribosomal_uL14_bac-type"/>
</dbReference>
<dbReference type="InterPro" id="IPR019972">
    <property type="entry name" value="Ribosomal_uL14_CS"/>
</dbReference>
<dbReference type="InterPro" id="IPR036853">
    <property type="entry name" value="Ribosomal_uL14_sf"/>
</dbReference>
<dbReference type="NCBIfam" id="TIGR01067">
    <property type="entry name" value="rplN_bact"/>
    <property type="match status" value="1"/>
</dbReference>
<dbReference type="PANTHER" id="PTHR11761">
    <property type="entry name" value="50S/60S RIBOSOMAL PROTEIN L14/L23"/>
    <property type="match status" value="1"/>
</dbReference>
<dbReference type="PANTHER" id="PTHR11761:SF3">
    <property type="entry name" value="LARGE RIBOSOMAL SUBUNIT PROTEIN UL14M"/>
    <property type="match status" value="1"/>
</dbReference>
<dbReference type="Pfam" id="PF00238">
    <property type="entry name" value="Ribosomal_L14"/>
    <property type="match status" value="1"/>
</dbReference>
<dbReference type="SMART" id="SM01374">
    <property type="entry name" value="Ribosomal_L14"/>
    <property type="match status" value="1"/>
</dbReference>
<dbReference type="SUPFAM" id="SSF50193">
    <property type="entry name" value="Ribosomal protein L14"/>
    <property type="match status" value="1"/>
</dbReference>
<dbReference type="PROSITE" id="PS00049">
    <property type="entry name" value="RIBOSOMAL_L14"/>
    <property type="match status" value="1"/>
</dbReference>
<gene>
    <name evidence="1" type="primary">rplN</name>
    <name type="ordered locus">Cphamn1_2286</name>
</gene>
<feature type="chain" id="PRO_1000144240" description="Large ribosomal subunit protein uL14">
    <location>
        <begin position="1"/>
        <end position="122"/>
    </location>
</feature>
<sequence length="122" mass="13426">MIQKETNLVVADNSGAKKVRCIHVFGGTGRRYASLGDQIMVTVKAAVPGGVVKKKEVTKAVVVRCAKEKRRKDGSYIRFDENAVVLLNAQGEPRGTRIFGPVARELRDKKYMKIVSLAPEVL</sequence>
<evidence type="ECO:0000255" key="1">
    <source>
        <dbReference type="HAMAP-Rule" id="MF_01367"/>
    </source>
</evidence>
<evidence type="ECO:0000305" key="2"/>
<reference key="1">
    <citation type="submission" date="2008-06" db="EMBL/GenBank/DDBJ databases">
        <title>Complete sequence of Chlorobium phaeobacteroides BS1.</title>
        <authorList>
            <consortium name="US DOE Joint Genome Institute"/>
            <person name="Lucas S."/>
            <person name="Copeland A."/>
            <person name="Lapidus A."/>
            <person name="Glavina del Rio T."/>
            <person name="Dalin E."/>
            <person name="Tice H."/>
            <person name="Bruce D."/>
            <person name="Goodwin L."/>
            <person name="Pitluck S."/>
            <person name="Schmutz J."/>
            <person name="Larimer F."/>
            <person name="Land M."/>
            <person name="Hauser L."/>
            <person name="Kyrpides N."/>
            <person name="Ovchinnikova G."/>
            <person name="Li T."/>
            <person name="Liu Z."/>
            <person name="Zhao F."/>
            <person name="Overmann J."/>
            <person name="Bryant D.A."/>
            <person name="Richardson P."/>
        </authorList>
    </citation>
    <scope>NUCLEOTIDE SEQUENCE [LARGE SCALE GENOMIC DNA]</scope>
    <source>
        <strain>BS1</strain>
    </source>
</reference>
<accession>B3EP51</accession>
<name>RL14_CHLPB</name>
<proteinExistence type="inferred from homology"/>
<protein>
    <recommendedName>
        <fullName evidence="1">Large ribosomal subunit protein uL14</fullName>
    </recommendedName>
    <alternativeName>
        <fullName evidence="2">50S ribosomal protein L14</fullName>
    </alternativeName>
</protein>
<keyword id="KW-0687">Ribonucleoprotein</keyword>
<keyword id="KW-0689">Ribosomal protein</keyword>
<keyword id="KW-0694">RNA-binding</keyword>
<keyword id="KW-0699">rRNA-binding</keyword>
<comment type="function">
    <text evidence="1">Binds to 23S rRNA. Forms part of two intersubunit bridges in the 70S ribosome.</text>
</comment>
<comment type="subunit">
    <text evidence="1">Part of the 50S ribosomal subunit. Forms a cluster with proteins L3 and L19. In the 70S ribosome, L14 and L19 interact and together make contacts with the 16S rRNA in bridges B5 and B8.</text>
</comment>
<comment type="similarity">
    <text evidence="1">Belongs to the universal ribosomal protein uL14 family.</text>
</comment>